<protein>
    <recommendedName>
        <fullName>Suppressor of Ty 6 homolog</fullName>
    </recommendedName>
    <alternativeName>
        <fullName>Abnormal embryogenesis protein 5</fullName>
    </alternativeName>
</protein>
<comment type="function">
    <text evidence="1 6">Histone H3-H4 chaperone that plays a role in maintenance of chromatin structure during RNA polymerase II transcription elongation (By similarity). Required for several aspects of morphogenesis of C.elegans, including regulation of division in the germline and gut and specification of ventral-uterine precursor cell fate (PubMed:8658178).</text>
</comment>
<comment type="subunit">
    <text evidence="6">Interacts with glp-1 and lin-12.</text>
</comment>
<comment type="subcellular location">
    <subcellularLocation>
        <location evidence="7">Nucleus</location>
    </subcellularLocation>
</comment>
<comment type="tissue specificity">
    <text>Abundant in embryos, and less abundant in larvae.</text>
</comment>
<comment type="similarity">
    <text evidence="7">Belongs to the SPT6 family.</text>
</comment>
<reference key="1">
    <citation type="journal article" date="1993" name="Mol. Gen. Genet.">
        <title>emb-5, a gene required for the correct timing of gut precursor cell division during gastrulation in Caenorhabditis elegans, encodes a protein similar to the yeast nuclear protein SPT6.</title>
        <authorList>
            <person name="Nishiwaki K."/>
            <person name="Sano T."/>
            <person name="Miwa J."/>
        </authorList>
    </citation>
    <scope>NUCLEOTIDE SEQUENCE [GENOMIC DNA]</scope>
    <scope>MUTAGENESIS OF ALA-859</scope>
    <source>
        <strain>Bristol N2</strain>
    </source>
</reference>
<reference key="2">
    <citation type="journal article" date="1998" name="Science">
        <title>Genome sequence of the nematode C. elegans: a platform for investigating biology.</title>
        <authorList>
            <consortium name="The C. elegans sequencing consortium"/>
        </authorList>
    </citation>
    <scope>NUCLEOTIDE SEQUENCE [LARGE SCALE GENOMIC DNA]</scope>
    <source>
        <strain>Bristol N2</strain>
    </source>
</reference>
<reference key="3">
    <citation type="journal article" date="1996" name="Science">
        <title>Evidence for physical and functional association between EMB-5 and LIN-12 in Caenorhabditis elegans.</title>
        <authorList>
            <person name="Hubbard E.J.A."/>
            <person name="Dong Q."/>
            <person name="Greenwald I."/>
        </authorList>
    </citation>
    <scope>FUNCTION</scope>
    <scope>INTERACTION WITH GLP-1 AND LIN-12</scope>
</reference>
<gene>
    <name type="primary">emb-5</name>
    <name type="ORF">T04A8.14</name>
</gene>
<evidence type="ECO:0000250" key="1">
    <source>
        <dbReference type="UniProtKB" id="P23615"/>
    </source>
</evidence>
<evidence type="ECO:0000255" key="2"/>
<evidence type="ECO:0000255" key="3">
    <source>
        <dbReference type="PROSITE-ProRule" id="PRU00180"/>
    </source>
</evidence>
<evidence type="ECO:0000256" key="4">
    <source>
        <dbReference type="SAM" id="MobiDB-lite"/>
    </source>
</evidence>
<evidence type="ECO:0000269" key="5">
    <source>
    </source>
</evidence>
<evidence type="ECO:0000269" key="6">
    <source>
    </source>
</evidence>
<evidence type="ECO:0000305" key="7"/>
<feature type="chain" id="PRO_0000072169" description="Suppressor of Ty 6 homolog">
    <location>
        <begin position="1"/>
        <end position="1521"/>
    </location>
</feature>
<feature type="domain" description="S1 motif" evidence="3">
    <location>
        <begin position="1183"/>
        <end position="1252"/>
    </location>
</feature>
<feature type="domain" description="SH2">
    <location>
        <begin position="1300"/>
        <end position="1389"/>
    </location>
</feature>
<feature type="region of interest" description="Disordered" evidence="4">
    <location>
        <begin position="1"/>
        <end position="238"/>
    </location>
</feature>
<feature type="short sequence motif" description="Nuclear localization signal" evidence="2">
    <location>
        <begin position="26"/>
        <end position="42"/>
    </location>
</feature>
<feature type="compositionally biased region" description="Basic residues" evidence="4">
    <location>
        <begin position="26"/>
        <end position="41"/>
    </location>
</feature>
<feature type="compositionally biased region" description="Acidic residues" evidence="4">
    <location>
        <begin position="45"/>
        <end position="56"/>
    </location>
</feature>
<feature type="compositionally biased region" description="Acidic residues" evidence="4">
    <location>
        <begin position="67"/>
        <end position="76"/>
    </location>
</feature>
<feature type="compositionally biased region" description="Basic and acidic residues" evidence="4">
    <location>
        <begin position="77"/>
        <end position="89"/>
    </location>
</feature>
<feature type="compositionally biased region" description="Acidic residues" evidence="4">
    <location>
        <begin position="90"/>
        <end position="99"/>
    </location>
</feature>
<feature type="compositionally biased region" description="Basic and acidic residues" evidence="4">
    <location>
        <begin position="126"/>
        <end position="157"/>
    </location>
</feature>
<feature type="compositionally biased region" description="Acidic residues" evidence="4">
    <location>
        <begin position="166"/>
        <end position="176"/>
    </location>
</feature>
<feature type="compositionally biased region" description="Acidic residues" evidence="4">
    <location>
        <begin position="191"/>
        <end position="200"/>
    </location>
</feature>
<feature type="compositionally biased region" description="Acidic residues" evidence="4">
    <location>
        <begin position="209"/>
        <end position="238"/>
    </location>
</feature>
<feature type="mutagenesis site" description="In HC61; temperature-sensitive." evidence="5">
    <original>A</original>
    <variation>E</variation>
    <location>
        <position position="859"/>
    </location>
</feature>
<dbReference type="EMBL" id="D14635">
    <property type="protein sequence ID" value="BAA03484.1"/>
    <property type="molecule type" value="Genomic_DNA"/>
</dbReference>
<dbReference type="EMBL" id="Z35663">
    <property type="protein sequence ID" value="CAA84737.1"/>
    <property type="molecule type" value="Genomic_DNA"/>
</dbReference>
<dbReference type="EMBL" id="Z35719">
    <property type="protein sequence ID" value="CAA84737.1"/>
    <property type="status" value="JOINED"/>
    <property type="molecule type" value="Genomic_DNA"/>
</dbReference>
<dbReference type="PIR" id="S35241">
    <property type="entry name" value="S35241"/>
</dbReference>
<dbReference type="RefSeq" id="NP_497969.1">
    <property type="nucleotide sequence ID" value="NM_065568.4"/>
</dbReference>
<dbReference type="SMR" id="P34703"/>
<dbReference type="BioGRID" id="40856">
    <property type="interactions" value="23"/>
</dbReference>
<dbReference type="FunCoup" id="P34703">
    <property type="interactions" value="3431"/>
</dbReference>
<dbReference type="STRING" id="6239.T04A8.14.1"/>
<dbReference type="iPTMnet" id="P34703"/>
<dbReference type="PaxDb" id="6239-T04A8.14"/>
<dbReference type="PeptideAtlas" id="P34703"/>
<dbReference type="EnsemblMetazoa" id="T04A8.14.1">
    <property type="protein sequence ID" value="T04A8.14.1"/>
    <property type="gene ID" value="WBGene00001259"/>
</dbReference>
<dbReference type="GeneID" id="175621"/>
<dbReference type="KEGG" id="cel:CELE_T04A8.14"/>
<dbReference type="UCSC" id="T04A8.14">
    <property type="organism name" value="c. elegans"/>
</dbReference>
<dbReference type="AGR" id="WB:WBGene00001259"/>
<dbReference type="CTD" id="175621"/>
<dbReference type="WormBase" id="T04A8.14">
    <property type="protein sequence ID" value="CE13120"/>
    <property type="gene ID" value="WBGene00001259"/>
    <property type="gene designation" value="emb-5"/>
</dbReference>
<dbReference type="eggNOG" id="KOG1856">
    <property type="taxonomic scope" value="Eukaryota"/>
</dbReference>
<dbReference type="GeneTree" id="ENSGT00510000047446"/>
<dbReference type="HOGENOM" id="CLU_001680_4_0_1"/>
<dbReference type="InParanoid" id="P34703"/>
<dbReference type="OMA" id="GYFYLCF"/>
<dbReference type="OrthoDB" id="343921at2759"/>
<dbReference type="PhylomeDB" id="P34703"/>
<dbReference type="Reactome" id="R-CEL-112382">
    <property type="pathway name" value="Formation of RNA Pol II elongation complex"/>
</dbReference>
<dbReference type="Reactome" id="R-CEL-674695">
    <property type="pathway name" value="RNA Polymerase II Pre-transcription Events"/>
</dbReference>
<dbReference type="Reactome" id="R-CEL-75955">
    <property type="pathway name" value="RNA Polymerase II Transcription Elongation"/>
</dbReference>
<dbReference type="SignaLink" id="P34703"/>
<dbReference type="PRO" id="PR:P34703"/>
<dbReference type="Proteomes" id="UP000001940">
    <property type="component" value="Chromosome III"/>
</dbReference>
<dbReference type="Bgee" id="WBGene00001259">
    <property type="expression patterns" value="Expressed in germ line (C elegans) and 4 other cell types or tissues"/>
</dbReference>
<dbReference type="GO" id="GO:0008023">
    <property type="term" value="C:transcription elongation factor complex"/>
    <property type="evidence" value="ECO:0000318"/>
    <property type="project" value="GO_Central"/>
</dbReference>
<dbReference type="GO" id="GO:0003677">
    <property type="term" value="F:DNA binding"/>
    <property type="evidence" value="ECO:0007669"/>
    <property type="project" value="InterPro"/>
</dbReference>
<dbReference type="GO" id="GO:0042393">
    <property type="term" value="F:histone binding"/>
    <property type="evidence" value="ECO:0000318"/>
    <property type="project" value="GO_Central"/>
</dbReference>
<dbReference type="GO" id="GO:0031491">
    <property type="term" value="F:nucleosome binding"/>
    <property type="evidence" value="ECO:0000318"/>
    <property type="project" value="GO_Central"/>
</dbReference>
<dbReference type="GO" id="GO:0034728">
    <property type="term" value="P:nucleosome organization"/>
    <property type="evidence" value="ECO:0000318"/>
    <property type="project" value="GO_Central"/>
</dbReference>
<dbReference type="GO" id="GO:0006368">
    <property type="term" value="P:transcription elongation by RNA polymerase II"/>
    <property type="evidence" value="ECO:0000318"/>
    <property type="project" value="GO_Central"/>
</dbReference>
<dbReference type="GO" id="GO:0140673">
    <property type="term" value="P:transcription elongation-coupled chromatin remodeling"/>
    <property type="evidence" value="ECO:0007669"/>
    <property type="project" value="InterPro"/>
</dbReference>
<dbReference type="CDD" id="cd09928">
    <property type="entry name" value="SH2_Cterm_SPT6_like"/>
    <property type="match status" value="1"/>
</dbReference>
<dbReference type="CDD" id="cd09918">
    <property type="entry name" value="SH2_Nterm_SPT6_like"/>
    <property type="match status" value="1"/>
</dbReference>
<dbReference type="FunFam" id="2.40.50.140:FF:000494">
    <property type="entry name" value="Suppressor of Ty 6 homolog"/>
    <property type="match status" value="1"/>
</dbReference>
<dbReference type="FunFam" id="3.30.420.140:FF:000028">
    <property type="entry name" value="Suppressor of Ty 6 homolog"/>
    <property type="match status" value="1"/>
</dbReference>
<dbReference type="FunFam" id="1.10.10.2740:FF:000002">
    <property type="entry name" value="Transcription elongation factor Spt6"/>
    <property type="match status" value="1"/>
</dbReference>
<dbReference type="FunFam" id="1.10.10.650:FF:000002">
    <property type="entry name" value="Transcription elongation factor spt6"/>
    <property type="match status" value="1"/>
</dbReference>
<dbReference type="FunFam" id="1.10.150.850:FF:000001">
    <property type="entry name" value="Transcription elongation factor spt6"/>
    <property type="match status" value="1"/>
</dbReference>
<dbReference type="FunFam" id="1.10.3500.10:FF:000006">
    <property type="entry name" value="Transcription elongation factor spt6"/>
    <property type="match status" value="1"/>
</dbReference>
<dbReference type="FunFam" id="3.30.505.10:FF:000030">
    <property type="entry name" value="Transcription elongation factor spt6"/>
    <property type="match status" value="1"/>
</dbReference>
<dbReference type="Gene3D" id="2.40.50.140">
    <property type="entry name" value="Nucleic acid-binding proteins"/>
    <property type="match status" value="1"/>
</dbReference>
<dbReference type="Gene3D" id="1.10.10.650">
    <property type="entry name" value="RuvA domain 2-like"/>
    <property type="match status" value="1"/>
</dbReference>
<dbReference type="Gene3D" id="3.30.505.10">
    <property type="entry name" value="SH2 domain"/>
    <property type="match status" value="2"/>
</dbReference>
<dbReference type="Gene3D" id="1.10.10.2740">
    <property type="entry name" value="Spt6, Death-like domain"/>
    <property type="match status" value="1"/>
</dbReference>
<dbReference type="Gene3D" id="1.10.150.850">
    <property type="entry name" value="Spt6, helix-hairpin-helix domain"/>
    <property type="match status" value="1"/>
</dbReference>
<dbReference type="Gene3D" id="1.10.3500.10">
    <property type="entry name" value="Tex N-terminal region-like"/>
    <property type="match status" value="1"/>
</dbReference>
<dbReference type="Gene3D" id="3.30.420.140">
    <property type="entry name" value="YqgF/RNase H-like domain"/>
    <property type="match status" value="1"/>
</dbReference>
<dbReference type="InterPro" id="IPR041692">
    <property type="entry name" value="HHH_9"/>
</dbReference>
<dbReference type="InterPro" id="IPR012340">
    <property type="entry name" value="NA-bd_OB-fold"/>
</dbReference>
<dbReference type="InterPro" id="IPR012337">
    <property type="entry name" value="RNaseH-like_sf"/>
</dbReference>
<dbReference type="InterPro" id="IPR010994">
    <property type="entry name" value="RuvA_2-like"/>
</dbReference>
<dbReference type="InterPro" id="IPR003029">
    <property type="entry name" value="S1_domain"/>
</dbReference>
<dbReference type="InterPro" id="IPR000980">
    <property type="entry name" value="SH2"/>
</dbReference>
<dbReference type="InterPro" id="IPR036860">
    <property type="entry name" value="SH2_dom_sf"/>
</dbReference>
<dbReference type="InterPro" id="IPR028083">
    <property type="entry name" value="Spt6_acidic_N_dom"/>
</dbReference>
<dbReference type="InterPro" id="IPR042066">
    <property type="entry name" value="Spt6_death-like"/>
</dbReference>
<dbReference type="InterPro" id="IPR032706">
    <property type="entry name" value="Spt6_HHH"/>
</dbReference>
<dbReference type="InterPro" id="IPR028088">
    <property type="entry name" value="Spt6_HTH_DNA-bd_dom"/>
</dbReference>
<dbReference type="InterPro" id="IPR035420">
    <property type="entry name" value="Spt6_SH2"/>
</dbReference>
<dbReference type="InterPro" id="IPR035018">
    <property type="entry name" value="Spt6_SH2_C"/>
</dbReference>
<dbReference type="InterPro" id="IPR035019">
    <property type="entry name" value="Spt6_SH2_N"/>
</dbReference>
<dbReference type="InterPro" id="IPR028231">
    <property type="entry name" value="Spt6_YqgF"/>
</dbReference>
<dbReference type="InterPro" id="IPR055179">
    <property type="entry name" value="Tex-like_central_region"/>
</dbReference>
<dbReference type="InterPro" id="IPR023323">
    <property type="entry name" value="Tex-like_dom_sf"/>
</dbReference>
<dbReference type="InterPro" id="IPR023319">
    <property type="entry name" value="Tex-like_HTH_dom_sf"/>
</dbReference>
<dbReference type="InterPro" id="IPR017072">
    <property type="entry name" value="TF_Spt6"/>
</dbReference>
<dbReference type="InterPro" id="IPR006641">
    <property type="entry name" value="YqgF/RNaseH-like_dom"/>
</dbReference>
<dbReference type="InterPro" id="IPR037027">
    <property type="entry name" value="YqgF/RNaseH-like_dom_sf"/>
</dbReference>
<dbReference type="PANTHER" id="PTHR10145">
    <property type="entry name" value="TRANSCRIPTION ELONGATION FACTOR SPT6"/>
    <property type="match status" value="1"/>
</dbReference>
<dbReference type="PANTHER" id="PTHR10145:SF6">
    <property type="entry name" value="TRANSCRIPTION ELONGATION FACTOR SPT6"/>
    <property type="match status" value="1"/>
</dbReference>
<dbReference type="Pfam" id="PF14635">
    <property type="entry name" value="HHH_7"/>
    <property type="match status" value="1"/>
</dbReference>
<dbReference type="Pfam" id="PF17674">
    <property type="entry name" value="HHH_9"/>
    <property type="match status" value="1"/>
</dbReference>
<dbReference type="Pfam" id="PF14641">
    <property type="entry name" value="HTH_44"/>
    <property type="match status" value="1"/>
</dbReference>
<dbReference type="Pfam" id="PF00575">
    <property type="entry name" value="S1"/>
    <property type="match status" value="1"/>
</dbReference>
<dbReference type="Pfam" id="PF14633">
    <property type="entry name" value="SH2_2"/>
    <property type="match status" value="1"/>
</dbReference>
<dbReference type="Pfam" id="PF14632">
    <property type="entry name" value="SPT6_acidic"/>
    <property type="match status" value="1"/>
</dbReference>
<dbReference type="Pfam" id="PF22706">
    <property type="entry name" value="Tex_central_region"/>
    <property type="match status" value="1"/>
</dbReference>
<dbReference type="Pfam" id="PF14639">
    <property type="entry name" value="YqgF"/>
    <property type="match status" value="1"/>
</dbReference>
<dbReference type="PIRSF" id="PIRSF036947">
    <property type="entry name" value="Spt6"/>
    <property type="match status" value="1"/>
</dbReference>
<dbReference type="SMART" id="SM00316">
    <property type="entry name" value="S1"/>
    <property type="match status" value="1"/>
</dbReference>
<dbReference type="SMART" id="SM00252">
    <property type="entry name" value="SH2"/>
    <property type="match status" value="1"/>
</dbReference>
<dbReference type="SMART" id="SM00732">
    <property type="entry name" value="YqgFc"/>
    <property type="match status" value="1"/>
</dbReference>
<dbReference type="SUPFAM" id="SSF50249">
    <property type="entry name" value="Nucleic acid-binding proteins"/>
    <property type="match status" value="1"/>
</dbReference>
<dbReference type="SUPFAM" id="SSF53098">
    <property type="entry name" value="Ribonuclease H-like"/>
    <property type="match status" value="1"/>
</dbReference>
<dbReference type="SUPFAM" id="SSF47781">
    <property type="entry name" value="RuvA domain 2-like"/>
    <property type="match status" value="2"/>
</dbReference>
<dbReference type="SUPFAM" id="SSF55550">
    <property type="entry name" value="SH2 domain"/>
    <property type="match status" value="1"/>
</dbReference>
<dbReference type="SUPFAM" id="SSF158832">
    <property type="entry name" value="Tex N-terminal region-like"/>
    <property type="match status" value="1"/>
</dbReference>
<dbReference type="PROSITE" id="PS50126">
    <property type="entry name" value="S1"/>
    <property type="match status" value="1"/>
</dbReference>
<accession>P34703</accession>
<accession>Q7JMP9</accession>
<sequence>MDFIDNQAEESDASSGHSDDEEPQSKKMKMAKEKSKRKKKMVASSDEDEDDDDDEEENRKEMQGFIADDDDEEEDAKSEKSEKSRHSGEDELDDEDLDLINENYDIRETKKQNRVQLGDSSDEDEPIRRPNHEDDDLLSERGSDDGDRRKDRGRGDRGGYGSESERSEDDFIEDDGDAPRRHRKRHRGDENLPEGAEDDARDVFGVEDFNLDEFYDDDDGEDGLEDEEEEIIEDDGEGGEIKIRRKKDTTKKSTLLESIEPSEIDRGFLLPGDKKIAKEDLPERFQLRRTPVTEADDDELESEALWIIKYAFEEGTVTNQADLDQDDKLDCIMNLDPSVYEDRKKAVIKSIKKVLQFIRVRSNSFEPTFIGFYRKEDIDNLLTMNNLWRVYDFDEKWCHLSEKKNKIYDLMRRMREYQELSDDLTAKRRPISDADLMDTKYAETLEQLTDIHANFQLLYGALLDDMIRWEKGRLTGEEEEQEYRVKFKSSIRNDKYQMCVENGIGELAGRFGLTAKQFSENLNWKKHDIEQDPMLPLEAAEEYVCPAFSDSDMVLNGAKFMLAKEISRQPQVRHSVRQEFRQSAHFWIKPTKKGRDTIDQTHPLYDKRYIKSKPVRSLTAEEFLFYHKAKEDGLVDVLIMYESEEDQDSNNYLVNKYLSDSIFQKDEYTENVEQWNSVRDECVNMAITEMLVPYMRDELYNTILEEAKTAVAKKCRKEFASRISRSGYLPDFDNNDDDDDGMDQHGARRIMAVCYPTERDEASFGVMVDENGAIVDYLRMVHFTKRTFGGGNNGLRKAESMDLFKKFVQRRKPHAIGLNIEDMECTRLKRDLEEAVADLFSQNLIYKPIPVFLMDNEAAKVYMRSNVSLAENPDHPPTLRQALSLARLLLDPIPEYAHLWNIDEDIFCLSLHPLQRDIDQEQLALVLSHELVNKVNEEGVDINKCAEFPHYTNMLQFTCGLGPRKATDLLKSIKANDNLIESRSKLVVGCKLGPKVFMNCAGFIKIDTIKVSEKTDAYVEVLDGSRVHPETYEWARKMAVDALEVDDSADPTAALQEIMESPDRLRDLDLDAFADELSRQGFGEKKSTLYDISSELSARYKDLRQPFQEPTGELLYDLLARSGKEIREGAKVLGTVQSVQYRKVDKDAADSMLPDVGEDGLFTCPCCKSFTSSAPGGIQEHMLGDSRQGGCPGTPVGIRVRFDNGMTGFCPNKNISSSHVDNPLTRVKINQPYYFKVLKLDKERFSLFLSCKSSDLKEDDLSQRDQYWDEHQYQADLELMKSESKKKTEANTRVKRVIAHPNFHNVSYEAATKMLDEMDWSECIIRPSANKDSGLSVTWKICDRVYHNFFVKESAKDQVFSIGRQLSVGGEDFEDLDELIARFVQPMIQISHEITTHKYFFPNGTCEETEAVEQFVREKKRELGRSPYVFSASYRQPCQFCISYMFDNTERIRHEYFKIVPHGVRFRHQNFDTLDRMMAWFKRHFHEPPIELRRSAIPAPQYRVGAPPAAPYYPPQFVGYH</sequence>
<keyword id="KW-0539">Nucleus</keyword>
<keyword id="KW-1185">Reference proteome</keyword>
<keyword id="KW-0804">Transcription</keyword>
<name>SPT6H_CAEEL</name>
<proteinExistence type="evidence at protein level"/>
<organism>
    <name type="scientific">Caenorhabditis elegans</name>
    <dbReference type="NCBI Taxonomy" id="6239"/>
    <lineage>
        <taxon>Eukaryota</taxon>
        <taxon>Metazoa</taxon>
        <taxon>Ecdysozoa</taxon>
        <taxon>Nematoda</taxon>
        <taxon>Chromadorea</taxon>
        <taxon>Rhabditida</taxon>
        <taxon>Rhabditina</taxon>
        <taxon>Rhabditomorpha</taxon>
        <taxon>Rhabditoidea</taxon>
        <taxon>Rhabditidae</taxon>
        <taxon>Peloderinae</taxon>
        <taxon>Caenorhabditis</taxon>
    </lineage>
</organism>